<dbReference type="EC" id="3.1.-.-"/>
<dbReference type="EMBL" id="AE001439">
    <property type="protein sequence ID" value="AAD05967.1"/>
    <property type="molecule type" value="Genomic_DNA"/>
</dbReference>
<dbReference type="PIR" id="B71937">
    <property type="entry name" value="B71937"/>
</dbReference>
<dbReference type="RefSeq" id="WP_000908744.1">
    <property type="nucleotide sequence ID" value="NC_000921.1"/>
</dbReference>
<dbReference type="KEGG" id="hpj:jhp_0380"/>
<dbReference type="PATRIC" id="fig|85963.30.peg.631"/>
<dbReference type="eggNOG" id="COG1408">
    <property type="taxonomic scope" value="Bacteria"/>
</dbReference>
<dbReference type="Proteomes" id="UP000000804">
    <property type="component" value="Chromosome"/>
</dbReference>
<dbReference type="GO" id="GO:0016020">
    <property type="term" value="C:membrane"/>
    <property type="evidence" value="ECO:0007669"/>
    <property type="project" value="GOC"/>
</dbReference>
<dbReference type="GO" id="GO:0046872">
    <property type="term" value="F:metal ion binding"/>
    <property type="evidence" value="ECO:0007669"/>
    <property type="project" value="UniProtKB-KW"/>
</dbReference>
<dbReference type="GO" id="GO:0008758">
    <property type="term" value="F:UDP-2,3-diacylglucosamine hydrolase activity"/>
    <property type="evidence" value="ECO:0007669"/>
    <property type="project" value="TreeGrafter"/>
</dbReference>
<dbReference type="GO" id="GO:0009245">
    <property type="term" value="P:lipid A biosynthetic process"/>
    <property type="evidence" value="ECO:0007669"/>
    <property type="project" value="TreeGrafter"/>
</dbReference>
<dbReference type="CDD" id="cd07385">
    <property type="entry name" value="MPP_YkuE_C"/>
    <property type="match status" value="1"/>
</dbReference>
<dbReference type="FunFam" id="3.60.21.10:FF:000028">
    <property type="entry name" value="Putative metallophosphoesterase"/>
    <property type="match status" value="1"/>
</dbReference>
<dbReference type="Gene3D" id="3.60.21.10">
    <property type="match status" value="1"/>
</dbReference>
<dbReference type="InterPro" id="IPR004843">
    <property type="entry name" value="Calcineurin-like_PHP_ApaH"/>
</dbReference>
<dbReference type="InterPro" id="IPR029052">
    <property type="entry name" value="Metallo-depent_PP-like"/>
</dbReference>
<dbReference type="InterPro" id="IPR051158">
    <property type="entry name" value="Metallophosphoesterase_sf"/>
</dbReference>
<dbReference type="PANTHER" id="PTHR31302:SF31">
    <property type="entry name" value="PHOSPHODIESTERASE YAEI"/>
    <property type="match status" value="1"/>
</dbReference>
<dbReference type="PANTHER" id="PTHR31302">
    <property type="entry name" value="TRANSMEMBRANE PROTEIN WITH METALLOPHOSPHOESTERASE DOMAIN-RELATED"/>
    <property type="match status" value="1"/>
</dbReference>
<dbReference type="Pfam" id="PF00149">
    <property type="entry name" value="Metallophos"/>
    <property type="match status" value="1"/>
</dbReference>
<dbReference type="SUPFAM" id="SSF56300">
    <property type="entry name" value="Metallo-dependent phosphatases"/>
    <property type="match status" value="1"/>
</dbReference>
<comment type="cofactor">
    <cofactor evidence="1">
        <name>a divalent metal cation</name>
        <dbReference type="ChEBI" id="CHEBI:60240"/>
    </cofactor>
    <text evidence="1">Binds 2 divalent metal cations.</text>
</comment>
<comment type="similarity">
    <text evidence="2">Belongs to the metallophosphoesterase superfamily.</text>
</comment>
<accession>Q9ZM43</accession>
<name>YA44_HELPJ</name>
<proteinExistence type="inferred from homology"/>
<keyword id="KW-0378">Hydrolase</keyword>
<keyword id="KW-0479">Metal-binding</keyword>
<organism>
    <name type="scientific">Helicobacter pylori (strain J99 / ATCC 700824)</name>
    <name type="common">Campylobacter pylori J99</name>
    <dbReference type="NCBI Taxonomy" id="85963"/>
    <lineage>
        <taxon>Bacteria</taxon>
        <taxon>Pseudomonadati</taxon>
        <taxon>Campylobacterota</taxon>
        <taxon>Epsilonproteobacteria</taxon>
        <taxon>Campylobacterales</taxon>
        <taxon>Helicobacteraceae</taxon>
        <taxon>Helicobacter</taxon>
    </lineage>
</organism>
<reference key="1">
    <citation type="journal article" date="1999" name="Nature">
        <title>Genomic sequence comparison of two unrelated isolates of the human gastric pathogen Helicobacter pylori.</title>
        <authorList>
            <person name="Alm R.A."/>
            <person name="Ling L.-S.L."/>
            <person name="Moir D.T."/>
            <person name="King B.L."/>
            <person name="Brown E.D."/>
            <person name="Doig P.C."/>
            <person name="Smith D.R."/>
            <person name="Noonan B."/>
            <person name="Guild B.C."/>
            <person name="deJonge B.L."/>
            <person name="Carmel G."/>
            <person name="Tummino P.J."/>
            <person name="Caruso A."/>
            <person name="Uria-Nickelsen M."/>
            <person name="Mills D.M."/>
            <person name="Ives C."/>
            <person name="Gibson R."/>
            <person name="Merberg D."/>
            <person name="Mills S.D."/>
            <person name="Jiang Q."/>
            <person name="Taylor D.E."/>
            <person name="Vovis G.F."/>
            <person name="Trust T.J."/>
        </authorList>
    </citation>
    <scope>NUCLEOTIDE SEQUENCE [LARGE SCALE GENOMIC DNA]</scope>
    <source>
        <strain>J99 / ATCC 700824</strain>
    </source>
</reference>
<evidence type="ECO:0000250" key="1"/>
<evidence type="ECO:0000305" key="2"/>
<gene>
    <name type="ordered locus">jhp_0380</name>
</gene>
<feature type="chain" id="PRO_0000172856" description="Uncharacterized metallophosphoesterase jhp_0380">
    <location>
        <begin position="1"/>
        <end position="370"/>
    </location>
</feature>
<feature type="binding site" evidence="1">
    <location>
        <position position="152"/>
    </location>
    <ligand>
        <name>a divalent metal cation</name>
        <dbReference type="ChEBI" id="CHEBI:60240"/>
        <label>1</label>
    </ligand>
</feature>
<feature type="binding site" evidence="1">
    <location>
        <position position="154"/>
    </location>
    <ligand>
        <name>a divalent metal cation</name>
        <dbReference type="ChEBI" id="CHEBI:60240"/>
        <label>1</label>
    </ligand>
</feature>
<feature type="binding site" evidence="1">
    <location>
        <position position="184"/>
    </location>
    <ligand>
        <name>a divalent metal cation</name>
        <dbReference type="ChEBI" id="CHEBI:60240"/>
        <label>1</label>
    </ligand>
</feature>
<feature type="binding site" evidence="1">
    <location>
        <position position="184"/>
    </location>
    <ligand>
        <name>a divalent metal cation</name>
        <dbReference type="ChEBI" id="CHEBI:60240"/>
        <label>2</label>
    </ligand>
</feature>
<feature type="binding site" evidence="1">
    <location>
        <position position="215"/>
    </location>
    <ligand>
        <name>a divalent metal cation</name>
        <dbReference type="ChEBI" id="CHEBI:60240"/>
        <label>2</label>
    </ligand>
</feature>
<feature type="binding site" evidence="1">
    <location>
        <position position="306"/>
    </location>
    <ligand>
        <name>a divalent metal cation</name>
        <dbReference type="ChEBI" id="CHEBI:60240"/>
        <label>2</label>
    </ligand>
</feature>
<feature type="binding site" evidence="1">
    <location>
        <position position="308"/>
    </location>
    <ligand>
        <name>a divalent metal cation</name>
        <dbReference type="ChEBI" id="CHEBI:60240"/>
        <label>1</label>
    </ligand>
</feature>
<sequence length="370" mass="42169">MLISIAFLLVLCLLNYSSFRMLKSFLTLKKISRYAYLGFFILLSAGEATFVFYRNVMPSHLFVLTSACSFVSFIAFVFSLSFYGFSYSVEKIDFLPSRRKGLKNFLRIGFYLALLGYFWRGFYEGLARPKIKETPIYLDKLDKELKIILLTDMHVGSLLQKDFVNYIVEEVNQKEVDMVLIGGDLVDENIEKVKSFLLPLNNLKSTHGTFYVPGNHEYYHGIEPILSFLNTLDMTILGNECVHLGGINLCGVYDYFARKRQDFAPDIDKALKKRDSSKPTILLAHQPKQIRSLKESHSIDLVLSGHTHAGQIFPFSLLVKLAQTYLHGLYKHSGTTQIYVSSGAGYWGIPLRFLAPSEIAYLRLLPKNQA</sequence>
<protein>
    <recommendedName>
        <fullName>Uncharacterized metallophosphoesterase jhp_0380</fullName>
        <ecNumber>3.1.-.-</ecNumber>
    </recommendedName>
</protein>